<gene>
    <name evidence="1" type="primary">rplQ</name>
    <name evidence="1" type="synonym">rpl17</name>
    <name type="ordered locus">P9215_18061</name>
</gene>
<evidence type="ECO:0000255" key="1">
    <source>
        <dbReference type="HAMAP-Rule" id="MF_01368"/>
    </source>
</evidence>
<evidence type="ECO:0000305" key="2"/>
<protein>
    <recommendedName>
        <fullName evidence="1">Large ribosomal subunit protein bL17</fullName>
    </recommendedName>
    <alternativeName>
        <fullName evidence="2">50S ribosomal protein L17</fullName>
    </alternativeName>
</protein>
<feature type="chain" id="PRO_1000068025" description="Large ribosomal subunit protein bL17">
    <location>
        <begin position="1"/>
        <end position="116"/>
    </location>
</feature>
<dbReference type="EMBL" id="CP000825">
    <property type="protein sequence ID" value="ABV51419.1"/>
    <property type="molecule type" value="Genomic_DNA"/>
</dbReference>
<dbReference type="RefSeq" id="WP_012008432.1">
    <property type="nucleotide sequence ID" value="NC_009840.1"/>
</dbReference>
<dbReference type="SMR" id="A8G738"/>
<dbReference type="STRING" id="93060.P9215_18061"/>
<dbReference type="KEGG" id="pmh:P9215_18061"/>
<dbReference type="eggNOG" id="COG0203">
    <property type="taxonomic scope" value="Bacteria"/>
</dbReference>
<dbReference type="HOGENOM" id="CLU_074407_2_2_3"/>
<dbReference type="OrthoDB" id="9809073at2"/>
<dbReference type="Proteomes" id="UP000002014">
    <property type="component" value="Chromosome"/>
</dbReference>
<dbReference type="GO" id="GO:0022625">
    <property type="term" value="C:cytosolic large ribosomal subunit"/>
    <property type="evidence" value="ECO:0007669"/>
    <property type="project" value="TreeGrafter"/>
</dbReference>
<dbReference type="GO" id="GO:0003735">
    <property type="term" value="F:structural constituent of ribosome"/>
    <property type="evidence" value="ECO:0007669"/>
    <property type="project" value="InterPro"/>
</dbReference>
<dbReference type="GO" id="GO:0006412">
    <property type="term" value="P:translation"/>
    <property type="evidence" value="ECO:0007669"/>
    <property type="project" value="UniProtKB-UniRule"/>
</dbReference>
<dbReference type="FunFam" id="3.90.1030.10:FF:000001">
    <property type="entry name" value="50S ribosomal protein L17"/>
    <property type="match status" value="1"/>
</dbReference>
<dbReference type="Gene3D" id="3.90.1030.10">
    <property type="entry name" value="Ribosomal protein L17"/>
    <property type="match status" value="1"/>
</dbReference>
<dbReference type="HAMAP" id="MF_01368">
    <property type="entry name" value="Ribosomal_bL17"/>
    <property type="match status" value="1"/>
</dbReference>
<dbReference type="InterPro" id="IPR000456">
    <property type="entry name" value="Ribosomal_bL17"/>
</dbReference>
<dbReference type="InterPro" id="IPR036373">
    <property type="entry name" value="Ribosomal_bL17_sf"/>
</dbReference>
<dbReference type="NCBIfam" id="TIGR00059">
    <property type="entry name" value="L17"/>
    <property type="match status" value="1"/>
</dbReference>
<dbReference type="PANTHER" id="PTHR14413:SF16">
    <property type="entry name" value="LARGE RIBOSOMAL SUBUNIT PROTEIN BL17M"/>
    <property type="match status" value="1"/>
</dbReference>
<dbReference type="PANTHER" id="PTHR14413">
    <property type="entry name" value="RIBOSOMAL PROTEIN L17"/>
    <property type="match status" value="1"/>
</dbReference>
<dbReference type="Pfam" id="PF01196">
    <property type="entry name" value="Ribosomal_L17"/>
    <property type="match status" value="1"/>
</dbReference>
<dbReference type="SUPFAM" id="SSF64263">
    <property type="entry name" value="Prokaryotic ribosomal protein L17"/>
    <property type="match status" value="1"/>
</dbReference>
<comment type="subunit">
    <text evidence="1">Part of the 50S ribosomal subunit. Contacts protein L32.</text>
</comment>
<comment type="similarity">
    <text evidence="1">Belongs to the bacterial ribosomal protein bL17 family.</text>
</comment>
<sequence length="116" mass="13248">MRHQLRIPLLSKPADQRKALLRGLTTQLIREGRVTTTKARAKALRNEAERMISLAKDGSLASRRRAIGYIYDKKLVHSLFEKAKERYGDREGGYTRIVRTVSRKGDNAQMAIIELV</sequence>
<keyword id="KW-0687">Ribonucleoprotein</keyword>
<keyword id="KW-0689">Ribosomal protein</keyword>
<reference key="1">
    <citation type="journal article" date="2007" name="PLoS Genet.">
        <title>Patterns and implications of gene gain and loss in the evolution of Prochlorococcus.</title>
        <authorList>
            <person name="Kettler G.C."/>
            <person name="Martiny A.C."/>
            <person name="Huang K."/>
            <person name="Zucker J."/>
            <person name="Coleman M.L."/>
            <person name="Rodrigue S."/>
            <person name="Chen F."/>
            <person name="Lapidus A."/>
            <person name="Ferriera S."/>
            <person name="Johnson J."/>
            <person name="Steglich C."/>
            <person name="Church G.M."/>
            <person name="Richardson P."/>
            <person name="Chisholm S.W."/>
        </authorList>
    </citation>
    <scope>NUCLEOTIDE SEQUENCE [LARGE SCALE GENOMIC DNA]</scope>
    <source>
        <strain>MIT 9215</strain>
    </source>
</reference>
<accession>A8G738</accession>
<organism>
    <name type="scientific">Prochlorococcus marinus (strain MIT 9215)</name>
    <dbReference type="NCBI Taxonomy" id="93060"/>
    <lineage>
        <taxon>Bacteria</taxon>
        <taxon>Bacillati</taxon>
        <taxon>Cyanobacteriota</taxon>
        <taxon>Cyanophyceae</taxon>
        <taxon>Synechococcales</taxon>
        <taxon>Prochlorococcaceae</taxon>
        <taxon>Prochlorococcus</taxon>
    </lineage>
</organism>
<name>RL17_PROM2</name>
<proteinExistence type="inferred from homology"/>